<accession>Q7D1M2</accession>
<organism>
    <name type="scientific">Agrobacterium fabrum (strain C58 / ATCC 33970)</name>
    <name type="common">Agrobacterium tumefaciens (strain C58)</name>
    <dbReference type="NCBI Taxonomy" id="176299"/>
    <lineage>
        <taxon>Bacteria</taxon>
        <taxon>Pseudomonadati</taxon>
        <taxon>Pseudomonadota</taxon>
        <taxon>Alphaproteobacteria</taxon>
        <taxon>Hyphomicrobiales</taxon>
        <taxon>Rhizobiaceae</taxon>
        <taxon>Rhizobium/Agrobacterium group</taxon>
        <taxon>Agrobacterium</taxon>
        <taxon>Agrobacterium tumefaciens complex</taxon>
    </lineage>
</organism>
<reference key="1">
    <citation type="journal article" date="2001" name="Science">
        <title>The genome of the natural genetic engineer Agrobacterium tumefaciens C58.</title>
        <authorList>
            <person name="Wood D.W."/>
            <person name="Setubal J.C."/>
            <person name="Kaul R."/>
            <person name="Monks D.E."/>
            <person name="Kitajima J.P."/>
            <person name="Okura V.K."/>
            <person name="Zhou Y."/>
            <person name="Chen L."/>
            <person name="Wood G.E."/>
            <person name="Almeida N.F. Jr."/>
            <person name="Woo L."/>
            <person name="Chen Y."/>
            <person name="Paulsen I.T."/>
            <person name="Eisen J.A."/>
            <person name="Karp P.D."/>
            <person name="Bovee D. Sr."/>
            <person name="Chapman P."/>
            <person name="Clendenning J."/>
            <person name="Deatherage G."/>
            <person name="Gillet W."/>
            <person name="Grant C."/>
            <person name="Kutyavin T."/>
            <person name="Levy R."/>
            <person name="Li M.-J."/>
            <person name="McClelland E."/>
            <person name="Palmieri A."/>
            <person name="Raymond C."/>
            <person name="Rouse G."/>
            <person name="Saenphimmachak C."/>
            <person name="Wu Z."/>
            <person name="Romero P."/>
            <person name="Gordon D."/>
            <person name="Zhang S."/>
            <person name="Yoo H."/>
            <person name="Tao Y."/>
            <person name="Biddle P."/>
            <person name="Jung M."/>
            <person name="Krespan W."/>
            <person name="Perry M."/>
            <person name="Gordon-Kamm B."/>
            <person name="Liao L."/>
            <person name="Kim S."/>
            <person name="Hendrick C."/>
            <person name="Zhao Z.-Y."/>
            <person name="Dolan M."/>
            <person name="Chumley F."/>
            <person name="Tingey S.V."/>
            <person name="Tomb J.-F."/>
            <person name="Gordon M.P."/>
            <person name="Olson M.V."/>
            <person name="Nester E.W."/>
        </authorList>
    </citation>
    <scope>NUCLEOTIDE SEQUENCE [LARGE SCALE GENOMIC DNA]</scope>
    <source>
        <strain>C58 / ATCC 33970</strain>
    </source>
</reference>
<reference key="2">
    <citation type="journal article" date="2001" name="Science">
        <title>Genome sequence of the plant pathogen and biotechnology agent Agrobacterium tumefaciens C58.</title>
        <authorList>
            <person name="Goodner B."/>
            <person name="Hinkle G."/>
            <person name="Gattung S."/>
            <person name="Miller N."/>
            <person name="Blanchard M."/>
            <person name="Qurollo B."/>
            <person name="Goldman B.S."/>
            <person name="Cao Y."/>
            <person name="Askenazi M."/>
            <person name="Halling C."/>
            <person name="Mullin L."/>
            <person name="Houmiel K."/>
            <person name="Gordon J."/>
            <person name="Vaudin M."/>
            <person name="Iartchouk O."/>
            <person name="Epp A."/>
            <person name="Liu F."/>
            <person name="Wollam C."/>
            <person name="Allinger M."/>
            <person name="Doughty D."/>
            <person name="Scott C."/>
            <person name="Lappas C."/>
            <person name="Markelz B."/>
            <person name="Flanagan C."/>
            <person name="Crowell C."/>
            <person name="Gurson J."/>
            <person name="Lomo C."/>
            <person name="Sear C."/>
            <person name="Strub G."/>
            <person name="Cielo C."/>
            <person name="Slater S."/>
        </authorList>
    </citation>
    <scope>NUCLEOTIDE SEQUENCE [LARGE SCALE GENOMIC DNA]</scope>
    <source>
        <strain>C58 / ATCC 33970</strain>
    </source>
</reference>
<keyword id="KW-0004">4Fe-4S</keyword>
<keyword id="KW-0963">Cytoplasm</keyword>
<keyword id="KW-0408">Iron</keyword>
<keyword id="KW-0411">Iron-sulfur</keyword>
<keyword id="KW-0479">Metal-binding</keyword>
<keyword id="KW-1185">Reference proteome</keyword>
<keyword id="KW-0949">S-adenosyl-L-methionine</keyword>
<keyword id="KW-0808">Transferase</keyword>
<keyword id="KW-0819">tRNA processing</keyword>
<dbReference type="EC" id="2.8.4.3" evidence="1"/>
<dbReference type="EMBL" id="AE007869">
    <property type="protein sequence ID" value="AAK86173.2"/>
    <property type="molecule type" value="Genomic_DNA"/>
</dbReference>
<dbReference type="RefSeq" id="NP_353388.2">
    <property type="nucleotide sequence ID" value="NC_003062.2"/>
</dbReference>
<dbReference type="SMR" id="Q7D1M2"/>
<dbReference type="STRING" id="176299.Atu0356"/>
<dbReference type="EnsemblBacteria" id="AAK86173">
    <property type="protein sequence ID" value="AAK86173"/>
    <property type="gene ID" value="Atu0356"/>
</dbReference>
<dbReference type="KEGG" id="atu:Atu0356"/>
<dbReference type="PATRIC" id="fig|176299.10.peg.347"/>
<dbReference type="eggNOG" id="COG0621">
    <property type="taxonomic scope" value="Bacteria"/>
</dbReference>
<dbReference type="HOGENOM" id="CLU_018697_2_0_5"/>
<dbReference type="OrthoDB" id="9805215at2"/>
<dbReference type="PhylomeDB" id="Q7D1M2"/>
<dbReference type="BioCyc" id="AGRO:ATU0356-MONOMER"/>
<dbReference type="Proteomes" id="UP000000813">
    <property type="component" value="Chromosome circular"/>
</dbReference>
<dbReference type="GO" id="GO:0005829">
    <property type="term" value="C:cytosol"/>
    <property type="evidence" value="ECO:0007669"/>
    <property type="project" value="TreeGrafter"/>
</dbReference>
<dbReference type="GO" id="GO:0051539">
    <property type="term" value="F:4 iron, 4 sulfur cluster binding"/>
    <property type="evidence" value="ECO:0007669"/>
    <property type="project" value="UniProtKB-UniRule"/>
</dbReference>
<dbReference type="GO" id="GO:0046872">
    <property type="term" value="F:metal ion binding"/>
    <property type="evidence" value="ECO:0007669"/>
    <property type="project" value="UniProtKB-KW"/>
</dbReference>
<dbReference type="GO" id="GO:0035597">
    <property type="term" value="F:N6-isopentenyladenosine methylthiotransferase activity"/>
    <property type="evidence" value="ECO:0007669"/>
    <property type="project" value="TreeGrafter"/>
</dbReference>
<dbReference type="CDD" id="cd01335">
    <property type="entry name" value="Radical_SAM"/>
    <property type="match status" value="1"/>
</dbReference>
<dbReference type="FunFam" id="3.40.50.12160:FF:000001">
    <property type="entry name" value="tRNA-2-methylthio-N(6)-dimethylallyladenosine synthase"/>
    <property type="match status" value="1"/>
</dbReference>
<dbReference type="FunFam" id="3.80.30.20:FF:000001">
    <property type="entry name" value="tRNA-2-methylthio-N(6)-dimethylallyladenosine synthase 2"/>
    <property type="match status" value="1"/>
</dbReference>
<dbReference type="Gene3D" id="3.40.50.12160">
    <property type="entry name" value="Methylthiotransferase, N-terminal domain"/>
    <property type="match status" value="1"/>
</dbReference>
<dbReference type="Gene3D" id="3.80.30.20">
    <property type="entry name" value="tm_1862 like domain"/>
    <property type="match status" value="1"/>
</dbReference>
<dbReference type="HAMAP" id="MF_01864">
    <property type="entry name" value="tRNA_metthiotr_MiaB"/>
    <property type="match status" value="1"/>
</dbReference>
<dbReference type="InterPro" id="IPR006638">
    <property type="entry name" value="Elp3/MiaA/NifB-like_rSAM"/>
</dbReference>
<dbReference type="InterPro" id="IPR005839">
    <property type="entry name" value="Methylthiotransferase"/>
</dbReference>
<dbReference type="InterPro" id="IPR020612">
    <property type="entry name" value="Methylthiotransferase_CS"/>
</dbReference>
<dbReference type="InterPro" id="IPR013848">
    <property type="entry name" value="Methylthiotransferase_N"/>
</dbReference>
<dbReference type="InterPro" id="IPR038135">
    <property type="entry name" value="Methylthiotransferase_N_sf"/>
</dbReference>
<dbReference type="InterPro" id="IPR006463">
    <property type="entry name" value="MiaB_methiolase"/>
</dbReference>
<dbReference type="InterPro" id="IPR007197">
    <property type="entry name" value="rSAM"/>
</dbReference>
<dbReference type="InterPro" id="IPR023404">
    <property type="entry name" value="rSAM_horseshoe"/>
</dbReference>
<dbReference type="InterPro" id="IPR002792">
    <property type="entry name" value="TRAM_dom"/>
</dbReference>
<dbReference type="NCBIfam" id="TIGR01574">
    <property type="entry name" value="miaB-methiolase"/>
    <property type="match status" value="1"/>
</dbReference>
<dbReference type="NCBIfam" id="TIGR00089">
    <property type="entry name" value="MiaB/RimO family radical SAM methylthiotransferase"/>
    <property type="match status" value="1"/>
</dbReference>
<dbReference type="PANTHER" id="PTHR43020">
    <property type="entry name" value="CDK5 REGULATORY SUBUNIT-ASSOCIATED PROTEIN 1"/>
    <property type="match status" value="1"/>
</dbReference>
<dbReference type="PANTHER" id="PTHR43020:SF2">
    <property type="entry name" value="MITOCHONDRIAL TRNA METHYLTHIOTRANSFERASE CDK5RAP1"/>
    <property type="match status" value="1"/>
</dbReference>
<dbReference type="Pfam" id="PF04055">
    <property type="entry name" value="Radical_SAM"/>
    <property type="match status" value="1"/>
</dbReference>
<dbReference type="Pfam" id="PF01938">
    <property type="entry name" value="TRAM"/>
    <property type="match status" value="1"/>
</dbReference>
<dbReference type="Pfam" id="PF00919">
    <property type="entry name" value="UPF0004"/>
    <property type="match status" value="1"/>
</dbReference>
<dbReference type="SFLD" id="SFLDF00273">
    <property type="entry name" value="(dimethylallyl)adenosine_tRNA"/>
    <property type="match status" value="1"/>
</dbReference>
<dbReference type="SFLD" id="SFLDG01082">
    <property type="entry name" value="B12-binding_domain_containing"/>
    <property type="match status" value="1"/>
</dbReference>
<dbReference type="SFLD" id="SFLDG01061">
    <property type="entry name" value="methylthiotransferase"/>
    <property type="match status" value="1"/>
</dbReference>
<dbReference type="SMART" id="SM00729">
    <property type="entry name" value="Elp3"/>
    <property type="match status" value="1"/>
</dbReference>
<dbReference type="SUPFAM" id="SSF102114">
    <property type="entry name" value="Radical SAM enzymes"/>
    <property type="match status" value="1"/>
</dbReference>
<dbReference type="PROSITE" id="PS51449">
    <property type="entry name" value="MTTASE_N"/>
    <property type="match status" value="1"/>
</dbReference>
<dbReference type="PROSITE" id="PS01278">
    <property type="entry name" value="MTTASE_RADICAL"/>
    <property type="match status" value="1"/>
</dbReference>
<dbReference type="PROSITE" id="PS51918">
    <property type="entry name" value="RADICAL_SAM"/>
    <property type="match status" value="1"/>
</dbReference>
<dbReference type="PROSITE" id="PS50926">
    <property type="entry name" value="TRAM"/>
    <property type="match status" value="1"/>
</dbReference>
<evidence type="ECO:0000255" key="1">
    <source>
        <dbReference type="HAMAP-Rule" id="MF_01864"/>
    </source>
</evidence>
<evidence type="ECO:0000255" key="2">
    <source>
        <dbReference type="PROSITE-ProRule" id="PRU01266"/>
    </source>
</evidence>
<feature type="chain" id="PRO_0000374099" description="tRNA-2-methylthio-N(6)-dimethylallyladenosine synthase">
    <location>
        <begin position="1"/>
        <end position="455"/>
    </location>
</feature>
<feature type="domain" description="MTTase N-terminal" evidence="1">
    <location>
        <begin position="10"/>
        <end position="130"/>
    </location>
</feature>
<feature type="domain" description="Radical SAM core" evidence="2">
    <location>
        <begin position="157"/>
        <end position="389"/>
    </location>
</feature>
<feature type="domain" description="TRAM" evidence="1">
    <location>
        <begin position="392"/>
        <end position="454"/>
    </location>
</feature>
<feature type="binding site" evidence="1">
    <location>
        <position position="19"/>
    </location>
    <ligand>
        <name>[4Fe-4S] cluster</name>
        <dbReference type="ChEBI" id="CHEBI:49883"/>
        <label>1</label>
    </ligand>
</feature>
<feature type="binding site" evidence="1">
    <location>
        <position position="55"/>
    </location>
    <ligand>
        <name>[4Fe-4S] cluster</name>
        <dbReference type="ChEBI" id="CHEBI:49883"/>
        <label>1</label>
    </ligand>
</feature>
<feature type="binding site" evidence="1">
    <location>
        <position position="93"/>
    </location>
    <ligand>
        <name>[4Fe-4S] cluster</name>
        <dbReference type="ChEBI" id="CHEBI:49883"/>
        <label>1</label>
    </ligand>
</feature>
<feature type="binding site" evidence="1">
    <location>
        <position position="171"/>
    </location>
    <ligand>
        <name>[4Fe-4S] cluster</name>
        <dbReference type="ChEBI" id="CHEBI:49883"/>
        <label>2</label>
        <note>4Fe-4S-S-AdoMet</note>
    </ligand>
</feature>
<feature type="binding site" evidence="1">
    <location>
        <position position="175"/>
    </location>
    <ligand>
        <name>[4Fe-4S] cluster</name>
        <dbReference type="ChEBI" id="CHEBI:49883"/>
        <label>2</label>
        <note>4Fe-4S-S-AdoMet</note>
    </ligand>
</feature>
<feature type="binding site" evidence="1">
    <location>
        <position position="178"/>
    </location>
    <ligand>
        <name>[4Fe-4S] cluster</name>
        <dbReference type="ChEBI" id="CHEBI:49883"/>
        <label>2</label>
        <note>4Fe-4S-S-AdoMet</note>
    </ligand>
</feature>
<gene>
    <name evidence="1" type="primary">miaB</name>
    <name type="ordered locus">Atu0356</name>
    <name type="ORF">AGR_C_623</name>
</gene>
<sequence>MIAREGSNSRKVFIKTYGCQMNVYDSVRMSDALAKDGYVQTEDMGEADLVLLNTCHIREKAAEKVYSALGRLRDMKKSREEQGREFMIGVAGCVAQAEGEEILRRAPAVDVVIGPQTYHRLPDALKRVRRGERVIETEYAVEDKFEHLPVAEKATLRSRGVTAFLTVQEGCDKFCTFCVVPYTRGSEVSRPVRQIVDEAMKLVDAGVREITLLGQNVNAWQGEGPKGEKWGLAELLYRLAEIPGLARLRYTTSHPRDMDDRLIGAHRDLRILMPYLHLPVQSGSDRILKAMNRRHTGEEYIQLIEKIRSARPDIAMSGDFIVGFPGETDRDFEDTMAMVETVKYAQAFSFKYSTRPGTPGADLTDQVAEDVKAERLERLQALLLRQQKEFAESLVGKTMDVLLEKPGRMPEQLIGRSPWLQSVNLDAKTLKIGDIVNVRITATGPNSLFAEVAGS</sequence>
<name>MIAB_AGRFC</name>
<comment type="function">
    <text evidence="1">Catalyzes the methylthiolation of N6-(dimethylallyl)adenosine (i(6)A), leading to the formation of 2-methylthio-N6-(dimethylallyl)adenosine (ms(2)i(6)A) at position 37 in tRNAs that read codons beginning with uridine.</text>
</comment>
<comment type="catalytic activity">
    <reaction evidence="1">
        <text>N(6)-dimethylallyladenosine(37) in tRNA + (sulfur carrier)-SH + AH2 + 2 S-adenosyl-L-methionine = 2-methylsulfanyl-N(6)-dimethylallyladenosine(37) in tRNA + (sulfur carrier)-H + 5'-deoxyadenosine + L-methionine + A + S-adenosyl-L-homocysteine + 2 H(+)</text>
        <dbReference type="Rhea" id="RHEA:37067"/>
        <dbReference type="Rhea" id="RHEA-COMP:10375"/>
        <dbReference type="Rhea" id="RHEA-COMP:10376"/>
        <dbReference type="Rhea" id="RHEA-COMP:14737"/>
        <dbReference type="Rhea" id="RHEA-COMP:14739"/>
        <dbReference type="ChEBI" id="CHEBI:13193"/>
        <dbReference type="ChEBI" id="CHEBI:15378"/>
        <dbReference type="ChEBI" id="CHEBI:17319"/>
        <dbReference type="ChEBI" id="CHEBI:17499"/>
        <dbReference type="ChEBI" id="CHEBI:29917"/>
        <dbReference type="ChEBI" id="CHEBI:57844"/>
        <dbReference type="ChEBI" id="CHEBI:57856"/>
        <dbReference type="ChEBI" id="CHEBI:59789"/>
        <dbReference type="ChEBI" id="CHEBI:64428"/>
        <dbReference type="ChEBI" id="CHEBI:74415"/>
        <dbReference type="ChEBI" id="CHEBI:74417"/>
        <dbReference type="EC" id="2.8.4.3"/>
    </reaction>
</comment>
<comment type="cofactor">
    <cofactor evidence="1">
        <name>[4Fe-4S] cluster</name>
        <dbReference type="ChEBI" id="CHEBI:49883"/>
    </cofactor>
    <text evidence="1">Binds 2 [4Fe-4S] clusters. One cluster is coordinated with 3 cysteines and an exchangeable S-adenosyl-L-methionine.</text>
</comment>
<comment type="subunit">
    <text evidence="1">Monomer.</text>
</comment>
<comment type="subcellular location">
    <subcellularLocation>
        <location evidence="1">Cytoplasm</location>
    </subcellularLocation>
</comment>
<comment type="similarity">
    <text evidence="1">Belongs to the methylthiotransferase family. MiaB subfamily.</text>
</comment>
<proteinExistence type="inferred from homology"/>
<protein>
    <recommendedName>
        <fullName evidence="1">tRNA-2-methylthio-N(6)-dimethylallyladenosine synthase</fullName>
        <ecNumber evidence="1">2.8.4.3</ecNumber>
    </recommendedName>
    <alternativeName>
        <fullName evidence="1">(Dimethylallyl)adenosine tRNA methylthiotransferase MiaB</fullName>
    </alternativeName>
    <alternativeName>
        <fullName evidence="1">tRNA-i(6)A37 methylthiotransferase</fullName>
    </alternativeName>
</protein>